<sequence>MAEITAALVKELRERTGQGMMECKKALVAAGGDIEKAIDDMRASGAIKAAKKAGNIAAEGSIAVRVEGGRGVIIEVNSQTDFLALQDDFKAFVKESIDEAFEKNLTEAAPLIASRESAREALVAKCGENVNIRRLTAVSGETVGAYLHGHRIGVLVVLKGGNDELAKHVAMHVAASNPAVVSPDQVSEELVAKEKEIFLQLNAEKIAGKPENIVENMVKGRIAKFLAEASLVEQAFIMDPEVKVGDLVKKAGAEVVSFVRYEVGEGIEKAETDFAAEVAAQVAASKQ</sequence>
<protein>
    <recommendedName>
        <fullName evidence="1">Elongation factor Ts</fullName>
        <shortName evidence="1">EF-Ts</shortName>
    </recommendedName>
</protein>
<reference key="1">
    <citation type="submission" date="2007-04" db="EMBL/GenBank/DDBJ databases">
        <title>Complete sequence of Pseudomonas mendocina ymp.</title>
        <authorList>
            <consortium name="US DOE Joint Genome Institute"/>
            <person name="Copeland A."/>
            <person name="Lucas S."/>
            <person name="Lapidus A."/>
            <person name="Barry K."/>
            <person name="Glavina del Rio T."/>
            <person name="Dalin E."/>
            <person name="Tice H."/>
            <person name="Pitluck S."/>
            <person name="Kiss H."/>
            <person name="Brettin T."/>
            <person name="Detter J.C."/>
            <person name="Bruce D."/>
            <person name="Han C."/>
            <person name="Schmutz J."/>
            <person name="Larimer F."/>
            <person name="Land M."/>
            <person name="Hauser L."/>
            <person name="Kyrpides N."/>
            <person name="Mikhailova N."/>
            <person name="Hersman L."/>
            <person name="Dubois J."/>
            <person name="Maurice P."/>
            <person name="Richardson P."/>
        </authorList>
    </citation>
    <scope>NUCLEOTIDE SEQUENCE [LARGE SCALE GENOMIC DNA]</scope>
    <source>
        <strain>ymp</strain>
    </source>
</reference>
<comment type="function">
    <text evidence="1">Associates with the EF-Tu.GDP complex and induces the exchange of GDP to GTP. It remains bound to the aminoacyl-tRNA.EF-Tu.GTP complex up to the GTP hydrolysis stage on the ribosome.</text>
</comment>
<comment type="subcellular location">
    <subcellularLocation>
        <location evidence="1">Cytoplasm</location>
    </subcellularLocation>
</comment>
<comment type="similarity">
    <text evidence="1">Belongs to the EF-Ts family.</text>
</comment>
<keyword id="KW-0963">Cytoplasm</keyword>
<keyword id="KW-0251">Elongation factor</keyword>
<keyword id="KW-0648">Protein biosynthesis</keyword>
<name>EFTS_ECTM1</name>
<dbReference type="EMBL" id="CP000680">
    <property type="protein sequence ID" value="ABP85806.1"/>
    <property type="molecule type" value="Genomic_DNA"/>
</dbReference>
<dbReference type="SMR" id="A4XWU0"/>
<dbReference type="STRING" id="399739.Pmen_3052"/>
<dbReference type="KEGG" id="pmy:Pmen_3052"/>
<dbReference type="PATRIC" id="fig|399739.8.peg.3098"/>
<dbReference type="eggNOG" id="COG0264">
    <property type="taxonomic scope" value="Bacteria"/>
</dbReference>
<dbReference type="HOGENOM" id="CLU_047155_0_2_6"/>
<dbReference type="OrthoDB" id="9808348at2"/>
<dbReference type="GO" id="GO:0005737">
    <property type="term" value="C:cytoplasm"/>
    <property type="evidence" value="ECO:0007669"/>
    <property type="project" value="UniProtKB-SubCell"/>
</dbReference>
<dbReference type="GO" id="GO:0003746">
    <property type="term" value="F:translation elongation factor activity"/>
    <property type="evidence" value="ECO:0007669"/>
    <property type="project" value="UniProtKB-UniRule"/>
</dbReference>
<dbReference type="CDD" id="cd14275">
    <property type="entry name" value="UBA_EF-Ts"/>
    <property type="match status" value="1"/>
</dbReference>
<dbReference type="FunFam" id="1.10.286.20:FF:000001">
    <property type="entry name" value="Elongation factor Ts"/>
    <property type="match status" value="1"/>
</dbReference>
<dbReference type="FunFam" id="1.10.8.10:FF:000001">
    <property type="entry name" value="Elongation factor Ts"/>
    <property type="match status" value="1"/>
</dbReference>
<dbReference type="Gene3D" id="1.10.286.20">
    <property type="match status" value="1"/>
</dbReference>
<dbReference type="Gene3D" id="1.10.8.10">
    <property type="entry name" value="DNA helicase RuvA subunit, C-terminal domain"/>
    <property type="match status" value="1"/>
</dbReference>
<dbReference type="Gene3D" id="3.30.479.20">
    <property type="entry name" value="Elongation factor Ts, dimerisation domain"/>
    <property type="match status" value="2"/>
</dbReference>
<dbReference type="HAMAP" id="MF_00050">
    <property type="entry name" value="EF_Ts"/>
    <property type="match status" value="1"/>
</dbReference>
<dbReference type="InterPro" id="IPR036402">
    <property type="entry name" value="EF-Ts_dimer_sf"/>
</dbReference>
<dbReference type="InterPro" id="IPR001816">
    <property type="entry name" value="Transl_elong_EFTs/EF1B"/>
</dbReference>
<dbReference type="InterPro" id="IPR014039">
    <property type="entry name" value="Transl_elong_EFTs/EF1B_dimer"/>
</dbReference>
<dbReference type="InterPro" id="IPR018101">
    <property type="entry name" value="Transl_elong_Ts_CS"/>
</dbReference>
<dbReference type="InterPro" id="IPR009060">
    <property type="entry name" value="UBA-like_sf"/>
</dbReference>
<dbReference type="NCBIfam" id="TIGR00116">
    <property type="entry name" value="tsf"/>
    <property type="match status" value="1"/>
</dbReference>
<dbReference type="PANTHER" id="PTHR11741">
    <property type="entry name" value="ELONGATION FACTOR TS"/>
    <property type="match status" value="1"/>
</dbReference>
<dbReference type="PANTHER" id="PTHR11741:SF0">
    <property type="entry name" value="ELONGATION FACTOR TS, MITOCHONDRIAL"/>
    <property type="match status" value="1"/>
</dbReference>
<dbReference type="Pfam" id="PF00889">
    <property type="entry name" value="EF_TS"/>
    <property type="match status" value="1"/>
</dbReference>
<dbReference type="SUPFAM" id="SSF54713">
    <property type="entry name" value="Elongation factor Ts (EF-Ts), dimerisation domain"/>
    <property type="match status" value="2"/>
</dbReference>
<dbReference type="SUPFAM" id="SSF46934">
    <property type="entry name" value="UBA-like"/>
    <property type="match status" value="1"/>
</dbReference>
<dbReference type="PROSITE" id="PS01126">
    <property type="entry name" value="EF_TS_1"/>
    <property type="match status" value="1"/>
</dbReference>
<dbReference type="PROSITE" id="PS01127">
    <property type="entry name" value="EF_TS_2"/>
    <property type="match status" value="1"/>
</dbReference>
<gene>
    <name evidence="1" type="primary">tsf</name>
    <name type="ordered locus">Pmen_3052</name>
</gene>
<evidence type="ECO:0000255" key="1">
    <source>
        <dbReference type="HAMAP-Rule" id="MF_00050"/>
    </source>
</evidence>
<organism>
    <name type="scientific">Ectopseudomonas mendocina (strain ymp)</name>
    <name type="common">Pseudomonas mendocina</name>
    <dbReference type="NCBI Taxonomy" id="399739"/>
    <lineage>
        <taxon>Bacteria</taxon>
        <taxon>Pseudomonadati</taxon>
        <taxon>Pseudomonadota</taxon>
        <taxon>Gammaproteobacteria</taxon>
        <taxon>Pseudomonadales</taxon>
        <taxon>Pseudomonadaceae</taxon>
        <taxon>Ectopseudomonas</taxon>
    </lineage>
</organism>
<proteinExistence type="inferred from homology"/>
<feature type="chain" id="PRO_1000006154" description="Elongation factor Ts">
    <location>
        <begin position="1"/>
        <end position="287"/>
    </location>
</feature>
<feature type="region of interest" description="Involved in Mg(2+) ion dislocation from EF-Tu" evidence="1">
    <location>
        <begin position="80"/>
        <end position="83"/>
    </location>
</feature>
<accession>A4XWU0</accession>